<proteinExistence type="inferred from homology"/>
<evidence type="ECO:0000255" key="1">
    <source>
        <dbReference type="HAMAP-Rule" id="MF_00534"/>
    </source>
</evidence>
<keyword id="KW-0030">Aminoacyl-tRNA synthetase</keyword>
<keyword id="KW-0067">ATP-binding</keyword>
<keyword id="KW-0963">Cytoplasm</keyword>
<keyword id="KW-0436">Ligase</keyword>
<keyword id="KW-0547">Nucleotide-binding</keyword>
<keyword id="KW-0648">Protein biosynthesis</keyword>
<keyword id="KW-1185">Reference proteome</keyword>
<accession>A9WA97</accession>
<feature type="chain" id="PRO_1000081845" description="Asparagine--tRNA ligase">
    <location>
        <begin position="1"/>
        <end position="440"/>
    </location>
</feature>
<dbReference type="EC" id="6.1.1.22" evidence="1"/>
<dbReference type="EMBL" id="CP000909">
    <property type="protein sequence ID" value="ABY34656.1"/>
    <property type="molecule type" value="Genomic_DNA"/>
</dbReference>
<dbReference type="RefSeq" id="WP_012257312.1">
    <property type="nucleotide sequence ID" value="NC_010175.1"/>
</dbReference>
<dbReference type="RefSeq" id="YP_001635045.1">
    <property type="nucleotide sequence ID" value="NC_010175.1"/>
</dbReference>
<dbReference type="SMR" id="A9WA97"/>
<dbReference type="FunCoup" id="A9WA97">
    <property type="interactions" value="403"/>
</dbReference>
<dbReference type="STRING" id="324602.Caur_1428"/>
<dbReference type="EnsemblBacteria" id="ABY34656">
    <property type="protein sequence ID" value="ABY34656"/>
    <property type="gene ID" value="Caur_1428"/>
</dbReference>
<dbReference type="KEGG" id="cau:Caur_1428"/>
<dbReference type="PATRIC" id="fig|324602.8.peg.1623"/>
<dbReference type="eggNOG" id="COG0017">
    <property type="taxonomic scope" value="Bacteria"/>
</dbReference>
<dbReference type="HOGENOM" id="CLU_004553_2_0_0"/>
<dbReference type="InParanoid" id="A9WA97"/>
<dbReference type="Proteomes" id="UP000002008">
    <property type="component" value="Chromosome"/>
</dbReference>
<dbReference type="GO" id="GO:0005737">
    <property type="term" value="C:cytoplasm"/>
    <property type="evidence" value="ECO:0007669"/>
    <property type="project" value="UniProtKB-SubCell"/>
</dbReference>
<dbReference type="GO" id="GO:0004816">
    <property type="term" value="F:asparagine-tRNA ligase activity"/>
    <property type="evidence" value="ECO:0007669"/>
    <property type="project" value="UniProtKB-UniRule"/>
</dbReference>
<dbReference type="GO" id="GO:0005524">
    <property type="term" value="F:ATP binding"/>
    <property type="evidence" value="ECO:0007669"/>
    <property type="project" value="UniProtKB-UniRule"/>
</dbReference>
<dbReference type="GO" id="GO:0003676">
    <property type="term" value="F:nucleic acid binding"/>
    <property type="evidence" value="ECO:0007669"/>
    <property type="project" value="InterPro"/>
</dbReference>
<dbReference type="GO" id="GO:0006421">
    <property type="term" value="P:asparaginyl-tRNA aminoacylation"/>
    <property type="evidence" value="ECO:0000318"/>
    <property type="project" value="GO_Central"/>
</dbReference>
<dbReference type="CDD" id="cd04323">
    <property type="entry name" value="AsnRS_cyto_like_N"/>
    <property type="match status" value="1"/>
</dbReference>
<dbReference type="CDD" id="cd00776">
    <property type="entry name" value="AsxRS_core"/>
    <property type="match status" value="1"/>
</dbReference>
<dbReference type="Gene3D" id="3.30.930.10">
    <property type="entry name" value="Bira Bifunctional Protein, Domain 2"/>
    <property type="match status" value="1"/>
</dbReference>
<dbReference type="Gene3D" id="2.40.50.140">
    <property type="entry name" value="Nucleic acid-binding proteins"/>
    <property type="match status" value="1"/>
</dbReference>
<dbReference type="HAMAP" id="MF_00534">
    <property type="entry name" value="Asn_tRNA_synth"/>
    <property type="match status" value="1"/>
</dbReference>
<dbReference type="InterPro" id="IPR004364">
    <property type="entry name" value="Aa-tRNA-synt_II"/>
</dbReference>
<dbReference type="InterPro" id="IPR006195">
    <property type="entry name" value="aa-tRNA-synth_II"/>
</dbReference>
<dbReference type="InterPro" id="IPR045864">
    <property type="entry name" value="aa-tRNA-synth_II/BPL/LPL"/>
</dbReference>
<dbReference type="InterPro" id="IPR004522">
    <property type="entry name" value="Asn-tRNA-ligase"/>
</dbReference>
<dbReference type="InterPro" id="IPR002312">
    <property type="entry name" value="Asp/Asn-tRNA-synth_IIb"/>
</dbReference>
<dbReference type="InterPro" id="IPR012340">
    <property type="entry name" value="NA-bd_OB-fold"/>
</dbReference>
<dbReference type="InterPro" id="IPR004365">
    <property type="entry name" value="NA-bd_OB_tRNA"/>
</dbReference>
<dbReference type="NCBIfam" id="TIGR00457">
    <property type="entry name" value="asnS"/>
    <property type="match status" value="1"/>
</dbReference>
<dbReference type="NCBIfam" id="NF003037">
    <property type="entry name" value="PRK03932.1"/>
    <property type="match status" value="1"/>
</dbReference>
<dbReference type="NCBIfam" id="NF003483">
    <property type="entry name" value="PRK05159.1"/>
    <property type="match status" value="1"/>
</dbReference>
<dbReference type="PANTHER" id="PTHR22594:SF34">
    <property type="entry name" value="ASPARAGINE--TRNA LIGASE, MITOCHONDRIAL-RELATED"/>
    <property type="match status" value="1"/>
</dbReference>
<dbReference type="PANTHER" id="PTHR22594">
    <property type="entry name" value="ASPARTYL/LYSYL-TRNA SYNTHETASE"/>
    <property type="match status" value="1"/>
</dbReference>
<dbReference type="Pfam" id="PF00152">
    <property type="entry name" value="tRNA-synt_2"/>
    <property type="match status" value="1"/>
</dbReference>
<dbReference type="Pfam" id="PF01336">
    <property type="entry name" value="tRNA_anti-codon"/>
    <property type="match status" value="1"/>
</dbReference>
<dbReference type="PRINTS" id="PR01042">
    <property type="entry name" value="TRNASYNTHASP"/>
</dbReference>
<dbReference type="SUPFAM" id="SSF55681">
    <property type="entry name" value="Class II aaRS and biotin synthetases"/>
    <property type="match status" value="1"/>
</dbReference>
<dbReference type="SUPFAM" id="SSF50249">
    <property type="entry name" value="Nucleic acid-binding proteins"/>
    <property type="match status" value="1"/>
</dbReference>
<dbReference type="PROSITE" id="PS50862">
    <property type="entry name" value="AA_TRNA_LIGASE_II"/>
    <property type="match status" value="1"/>
</dbReference>
<name>SYN_CHLAA</name>
<reference key="1">
    <citation type="journal article" date="2011" name="BMC Genomics">
        <title>Complete genome sequence of the filamentous anoxygenic phototrophic bacterium Chloroflexus aurantiacus.</title>
        <authorList>
            <person name="Tang K.H."/>
            <person name="Barry K."/>
            <person name="Chertkov O."/>
            <person name="Dalin E."/>
            <person name="Han C.S."/>
            <person name="Hauser L.J."/>
            <person name="Honchak B.M."/>
            <person name="Karbach L.E."/>
            <person name="Land M.L."/>
            <person name="Lapidus A."/>
            <person name="Larimer F.W."/>
            <person name="Mikhailova N."/>
            <person name="Pitluck S."/>
            <person name="Pierson B.K."/>
            <person name="Blankenship R.E."/>
        </authorList>
    </citation>
    <scope>NUCLEOTIDE SEQUENCE [LARGE SCALE GENOMIC DNA]</scope>
    <source>
        <strain>ATCC 29366 / DSM 635 / J-10-fl</strain>
    </source>
</reference>
<gene>
    <name evidence="1" type="primary">asnS</name>
    <name type="ordered locus">Caur_1428</name>
</gene>
<comment type="catalytic activity">
    <reaction evidence="1">
        <text>tRNA(Asn) + L-asparagine + ATP = L-asparaginyl-tRNA(Asn) + AMP + diphosphate + H(+)</text>
        <dbReference type="Rhea" id="RHEA:11180"/>
        <dbReference type="Rhea" id="RHEA-COMP:9659"/>
        <dbReference type="Rhea" id="RHEA-COMP:9674"/>
        <dbReference type="ChEBI" id="CHEBI:15378"/>
        <dbReference type="ChEBI" id="CHEBI:30616"/>
        <dbReference type="ChEBI" id="CHEBI:33019"/>
        <dbReference type="ChEBI" id="CHEBI:58048"/>
        <dbReference type="ChEBI" id="CHEBI:78442"/>
        <dbReference type="ChEBI" id="CHEBI:78515"/>
        <dbReference type="ChEBI" id="CHEBI:456215"/>
        <dbReference type="EC" id="6.1.1.22"/>
    </reaction>
</comment>
<comment type="subunit">
    <text evidence="1">Homodimer.</text>
</comment>
<comment type="subcellular location">
    <subcellularLocation>
        <location evidence="1">Cytoplasm</location>
    </subcellularLocation>
</comment>
<comment type="similarity">
    <text evidence="1">Belongs to the class-II aminoacyl-tRNA synthetase family.</text>
</comment>
<sequence length="440" mass="50042">MSLLPTATVATIARYVGQRVTLAGWVYHKTEKGKLIFILLRDGSGTIQCVTFKKNVSEETFATAQSLTQESSCRITGSVRADERAPGGYELDVESIELIGPSHEYPITPKEHGVEFLMAHRHLWVRSAKQHAILRIRAEVIAAAQEWLNEQGFVRFDTPILTATAAEGTTNLFATDYFDLGKAYLAQTGQLYVEAGMMAFGKVYCFGPTFRAEKSKTRRHLTEFWMIEPEVAFADHEDNMRLQEEFVSAIVARVLERRRDDLQTLERDTTLLEQVRPPFPRITYDEAIELIAAHQGEVEGADPLPWGEDFGAPHETLIASKFDRPVFVERFPSAVKAFYMQPDPERPEVALCADLLAPEGYGEIIGGSQRIHDPILLEQRIREHGLRIEDYEWYLDLRRYGTVPHSGFGMGIERVVAWITGTRHIRETIPFPRQLYRIYP</sequence>
<protein>
    <recommendedName>
        <fullName evidence="1">Asparagine--tRNA ligase</fullName>
        <ecNumber evidence="1">6.1.1.22</ecNumber>
    </recommendedName>
    <alternativeName>
        <fullName evidence="1">Asparaginyl-tRNA synthetase</fullName>
        <shortName evidence="1">AsnRS</shortName>
    </alternativeName>
</protein>
<organism>
    <name type="scientific">Chloroflexus aurantiacus (strain ATCC 29366 / DSM 635 / J-10-fl)</name>
    <dbReference type="NCBI Taxonomy" id="324602"/>
    <lineage>
        <taxon>Bacteria</taxon>
        <taxon>Bacillati</taxon>
        <taxon>Chloroflexota</taxon>
        <taxon>Chloroflexia</taxon>
        <taxon>Chloroflexales</taxon>
        <taxon>Chloroflexineae</taxon>
        <taxon>Chloroflexaceae</taxon>
        <taxon>Chloroflexus</taxon>
    </lineage>
</organism>